<gene>
    <name evidence="1" type="primary">hflD</name>
    <name type="ordered locus">STM1233</name>
</gene>
<dbReference type="EMBL" id="AE006468">
    <property type="protein sequence ID" value="AAL20162.1"/>
    <property type="status" value="ALT_INIT"/>
    <property type="molecule type" value="Genomic_DNA"/>
</dbReference>
<dbReference type="SMR" id="Q8ZPZ5"/>
<dbReference type="STRING" id="99287.STM1233"/>
<dbReference type="PaxDb" id="99287-STM1233"/>
<dbReference type="KEGG" id="stm:STM1233"/>
<dbReference type="PATRIC" id="fig|99287.12.peg.1304"/>
<dbReference type="HOGENOM" id="CLU_098920_0_0_6"/>
<dbReference type="PhylomeDB" id="Q8ZPZ5"/>
<dbReference type="Proteomes" id="UP000001014">
    <property type="component" value="Chromosome"/>
</dbReference>
<dbReference type="GO" id="GO:0005737">
    <property type="term" value="C:cytoplasm"/>
    <property type="evidence" value="ECO:0007669"/>
    <property type="project" value="UniProtKB-SubCell"/>
</dbReference>
<dbReference type="GO" id="GO:0005886">
    <property type="term" value="C:plasma membrane"/>
    <property type="evidence" value="ECO:0007669"/>
    <property type="project" value="UniProtKB-SubCell"/>
</dbReference>
<dbReference type="FunFam" id="1.10.3890.10:FF:000001">
    <property type="entry name" value="High frequency lysogenization protein HflD homolog"/>
    <property type="match status" value="1"/>
</dbReference>
<dbReference type="Gene3D" id="1.10.3890.10">
    <property type="entry name" value="HflD-like"/>
    <property type="match status" value="1"/>
</dbReference>
<dbReference type="HAMAP" id="MF_00695">
    <property type="entry name" value="HflD_protein"/>
    <property type="match status" value="1"/>
</dbReference>
<dbReference type="InterPro" id="IPR007451">
    <property type="entry name" value="HflD"/>
</dbReference>
<dbReference type="InterPro" id="IPR035932">
    <property type="entry name" value="HflD-like_sf"/>
</dbReference>
<dbReference type="NCBIfam" id="NF001245">
    <property type="entry name" value="PRK00218.1-1"/>
    <property type="match status" value="1"/>
</dbReference>
<dbReference type="NCBIfam" id="NF001246">
    <property type="entry name" value="PRK00218.1-2"/>
    <property type="match status" value="1"/>
</dbReference>
<dbReference type="NCBIfam" id="NF001248">
    <property type="entry name" value="PRK00218.1-4"/>
    <property type="match status" value="1"/>
</dbReference>
<dbReference type="NCBIfam" id="NF001249">
    <property type="entry name" value="PRK00218.1-5"/>
    <property type="match status" value="1"/>
</dbReference>
<dbReference type="PANTHER" id="PTHR38100">
    <property type="entry name" value="HIGH FREQUENCY LYSOGENIZATION PROTEIN HFLD"/>
    <property type="match status" value="1"/>
</dbReference>
<dbReference type="PANTHER" id="PTHR38100:SF1">
    <property type="entry name" value="HIGH FREQUENCY LYSOGENIZATION PROTEIN HFLD"/>
    <property type="match status" value="1"/>
</dbReference>
<dbReference type="Pfam" id="PF04356">
    <property type="entry name" value="DUF489"/>
    <property type="match status" value="1"/>
</dbReference>
<dbReference type="SUPFAM" id="SSF101322">
    <property type="entry name" value="YcfC-like"/>
    <property type="match status" value="1"/>
</dbReference>
<comment type="subcellular location">
    <subcellularLocation>
        <location>Cytoplasm</location>
    </subcellularLocation>
    <subcellularLocation>
        <location evidence="1">Cell inner membrane</location>
        <topology evidence="1">Peripheral membrane protein</topology>
        <orientation evidence="1">Cytoplasmic side</orientation>
    </subcellularLocation>
</comment>
<comment type="similarity">
    <text evidence="1">Belongs to the HflD family.</text>
</comment>
<comment type="sequence caution" evidence="2">
    <conflict type="erroneous initiation">
        <sequence resource="EMBL-CDS" id="AAL20162"/>
    </conflict>
</comment>
<sequence>MAKNYYDITLALSGICQSARLVQQLAHQGHCDADALHVSLNSVIDMNPSSTLGVFGGSEANLRLGLETLLGVLNASSRQGLNAELTRYTLSLMVLERKLSSAKGALNTLGDRINGLQRQLDHFDLQSDTLMSAMAGIYVDVISPLGPRIQVTGSPAVLQSPQVQAKVRASLLAGIRAAVLWHQVGGGRLQLMFSRHRLTTQAKQILAHLTPEL</sequence>
<proteinExistence type="inferred from homology"/>
<protein>
    <recommendedName>
        <fullName evidence="1">High frequency lysogenization protein HflD homolog</fullName>
    </recommendedName>
</protein>
<evidence type="ECO:0000255" key="1">
    <source>
        <dbReference type="HAMAP-Rule" id="MF_00695"/>
    </source>
</evidence>
<evidence type="ECO:0000305" key="2"/>
<keyword id="KW-0997">Cell inner membrane</keyword>
<keyword id="KW-1003">Cell membrane</keyword>
<keyword id="KW-0175">Coiled coil</keyword>
<keyword id="KW-0963">Cytoplasm</keyword>
<keyword id="KW-0472">Membrane</keyword>
<keyword id="KW-1185">Reference proteome</keyword>
<name>HFLD_SALTY</name>
<reference key="1">
    <citation type="journal article" date="2001" name="Nature">
        <title>Complete genome sequence of Salmonella enterica serovar Typhimurium LT2.</title>
        <authorList>
            <person name="McClelland M."/>
            <person name="Sanderson K.E."/>
            <person name="Spieth J."/>
            <person name="Clifton S.W."/>
            <person name="Latreille P."/>
            <person name="Courtney L."/>
            <person name="Porwollik S."/>
            <person name="Ali J."/>
            <person name="Dante M."/>
            <person name="Du F."/>
            <person name="Hou S."/>
            <person name="Layman D."/>
            <person name="Leonard S."/>
            <person name="Nguyen C."/>
            <person name="Scott K."/>
            <person name="Holmes A."/>
            <person name="Grewal N."/>
            <person name="Mulvaney E."/>
            <person name="Ryan E."/>
            <person name="Sun H."/>
            <person name="Florea L."/>
            <person name="Miller W."/>
            <person name="Stoneking T."/>
            <person name="Nhan M."/>
            <person name="Waterston R."/>
            <person name="Wilson R.K."/>
        </authorList>
    </citation>
    <scope>NUCLEOTIDE SEQUENCE [LARGE SCALE GENOMIC DNA]</scope>
    <source>
        <strain>LT2 / SGSC1412 / ATCC 700720</strain>
    </source>
</reference>
<accession>Q8ZPZ5</accession>
<feature type="chain" id="PRO_0000071587" description="High frequency lysogenization protein HflD homolog">
    <location>
        <begin position="1"/>
        <end position="213"/>
    </location>
</feature>
<feature type="coiled-coil region" evidence="1">
    <location>
        <begin position="79"/>
        <end position="122"/>
    </location>
</feature>
<organism>
    <name type="scientific">Salmonella typhimurium (strain LT2 / SGSC1412 / ATCC 700720)</name>
    <dbReference type="NCBI Taxonomy" id="99287"/>
    <lineage>
        <taxon>Bacteria</taxon>
        <taxon>Pseudomonadati</taxon>
        <taxon>Pseudomonadota</taxon>
        <taxon>Gammaproteobacteria</taxon>
        <taxon>Enterobacterales</taxon>
        <taxon>Enterobacteriaceae</taxon>
        <taxon>Salmonella</taxon>
    </lineage>
</organism>